<accession>A5FP90</accession>
<proteinExistence type="inferred from homology"/>
<comment type="catalytic activity">
    <reaction evidence="1">
        <text>tRNA(Cys) + L-cysteine + ATP = L-cysteinyl-tRNA(Cys) + AMP + diphosphate</text>
        <dbReference type="Rhea" id="RHEA:17773"/>
        <dbReference type="Rhea" id="RHEA-COMP:9661"/>
        <dbReference type="Rhea" id="RHEA-COMP:9679"/>
        <dbReference type="ChEBI" id="CHEBI:30616"/>
        <dbReference type="ChEBI" id="CHEBI:33019"/>
        <dbReference type="ChEBI" id="CHEBI:35235"/>
        <dbReference type="ChEBI" id="CHEBI:78442"/>
        <dbReference type="ChEBI" id="CHEBI:78517"/>
        <dbReference type="ChEBI" id="CHEBI:456215"/>
        <dbReference type="EC" id="6.1.1.16"/>
    </reaction>
</comment>
<comment type="cofactor">
    <cofactor evidence="1">
        <name>Zn(2+)</name>
        <dbReference type="ChEBI" id="CHEBI:29105"/>
    </cofactor>
    <text evidence="1">Binds 1 zinc ion per subunit.</text>
</comment>
<comment type="subunit">
    <text evidence="1">Monomer.</text>
</comment>
<comment type="subcellular location">
    <subcellularLocation>
        <location evidence="1">Cytoplasm</location>
    </subcellularLocation>
</comment>
<comment type="similarity">
    <text evidence="1">Belongs to the class-I aminoacyl-tRNA synthetase family.</text>
</comment>
<keyword id="KW-0030">Aminoacyl-tRNA synthetase</keyword>
<keyword id="KW-0067">ATP-binding</keyword>
<keyword id="KW-0963">Cytoplasm</keyword>
<keyword id="KW-0436">Ligase</keyword>
<keyword id="KW-0479">Metal-binding</keyword>
<keyword id="KW-0547">Nucleotide-binding</keyword>
<keyword id="KW-0648">Protein biosynthesis</keyword>
<keyword id="KW-0862">Zinc</keyword>
<dbReference type="EC" id="6.1.1.16" evidence="1"/>
<dbReference type="EMBL" id="CP000688">
    <property type="protein sequence ID" value="ABQ16647.1"/>
    <property type="molecule type" value="Genomic_DNA"/>
</dbReference>
<dbReference type="SMR" id="A5FP90"/>
<dbReference type="KEGG" id="deb:DehaBAV1_0055"/>
<dbReference type="PATRIC" id="fig|216389.18.peg.58"/>
<dbReference type="HOGENOM" id="CLU_013528_0_1_0"/>
<dbReference type="GO" id="GO:0005829">
    <property type="term" value="C:cytosol"/>
    <property type="evidence" value="ECO:0007669"/>
    <property type="project" value="TreeGrafter"/>
</dbReference>
<dbReference type="GO" id="GO:0005524">
    <property type="term" value="F:ATP binding"/>
    <property type="evidence" value="ECO:0007669"/>
    <property type="project" value="UniProtKB-UniRule"/>
</dbReference>
<dbReference type="GO" id="GO:0004817">
    <property type="term" value="F:cysteine-tRNA ligase activity"/>
    <property type="evidence" value="ECO:0007669"/>
    <property type="project" value="UniProtKB-UniRule"/>
</dbReference>
<dbReference type="GO" id="GO:0008270">
    <property type="term" value="F:zinc ion binding"/>
    <property type="evidence" value="ECO:0007669"/>
    <property type="project" value="UniProtKB-UniRule"/>
</dbReference>
<dbReference type="GO" id="GO:0006423">
    <property type="term" value="P:cysteinyl-tRNA aminoacylation"/>
    <property type="evidence" value="ECO:0007669"/>
    <property type="project" value="UniProtKB-UniRule"/>
</dbReference>
<dbReference type="CDD" id="cd00672">
    <property type="entry name" value="CysRS_core"/>
    <property type="match status" value="1"/>
</dbReference>
<dbReference type="FunFam" id="3.40.50.620:FF:000009">
    <property type="entry name" value="Cysteine--tRNA ligase"/>
    <property type="match status" value="1"/>
</dbReference>
<dbReference type="Gene3D" id="1.20.120.1910">
    <property type="entry name" value="Cysteine-tRNA ligase, C-terminal anti-codon recognition domain"/>
    <property type="match status" value="1"/>
</dbReference>
<dbReference type="Gene3D" id="3.40.50.620">
    <property type="entry name" value="HUPs"/>
    <property type="match status" value="1"/>
</dbReference>
<dbReference type="HAMAP" id="MF_00041">
    <property type="entry name" value="Cys_tRNA_synth"/>
    <property type="match status" value="1"/>
</dbReference>
<dbReference type="InterPro" id="IPR015803">
    <property type="entry name" value="Cys-tRNA-ligase"/>
</dbReference>
<dbReference type="InterPro" id="IPR015273">
    <property type="entry name" value="Cys-tRNA-synt_Ia_DALR"/>
</dbReference>
<dbReference type="InterPro" id="IPR024909">
    <property type="entry name" value="Cys-tRNA/MSH_ligase"/>
</dbReference>
<dbReference type="InterPro" id="IPR014729">
    <property type="entry name" value="Rossmann-like_a/b/a_fold"/>
</dbReference>
<dbReference type="InterPro" id="IPR032678">
    <property type="entry name" value="tRNA-synt_1_cat_dom"/>
</dbReference>
<dbReference type="InterPro" id="IPR009080">
    <property type="entry name" value="tRNAsynth_Ia_anticodon-bd"/>
</dbReference>
<dbReference type="NCBIfam" id="TIGR00435">
    <property type="entry name" value="cysS"/>
    <property type="match status" value="1"/>
</dbReference>
<dbReference type="PANTHER" id="PTHR10890:SF3">
    <property type="entry name" value="CYSTEINE--TRNA LIGASE, CYTOPLASMIC"/>
    <property type="match status" value="1"/>
</dbReference>
<dbReference type="PANTHER" id="PTHR10890">
    <property type="entry name" value="CYSTEINYL-TRNA SYNTHETASE"/>
    <property type="match status" value="1"/>
</dbReference>
<dbReference type="Pfam" id="PF09190">
    <property type="entry name" value="DALR_2"/>
    <property type="match status" value="1"/>
</dbReference>
<dbReference type="Pfam" id="PF01406">
    <property type="entry name" value="tRNA-synt_1e"/>
    <property type="match status" value="1"/>
</dbReference>
<dbReference type="PRINTS" id="PR00983">
    <property type="entry name" value="TRNASYNTHCYS"/>
</dbReference>
<dbReference type="SMART" id="SM00840">
    <property type="entry name" value="DALR_2"/>
    <property type="match status" value="1"/>
</dbReference>
<dbReference type="SUPFAM" id="SSF47323">
    <property type="entry name" value="Anticodon-binding domain of a subclass of class I aminoacyl-tRNA synthetases"/>
    <property type="match status" value="1"/>
</dbReference>
<dbReference type="SUPFAM" id="SSF52374">
    <property type="entry name" value="Nucleotidylyl transferase"/>
    <property type="match status" value="1"/>
</dbReference>
<sequence>MKIYNTLSGKLEEFVPLENDKVKMYVCGITPQSEPHIGHAMSYINFDVIRRYLTYKGYRVKYIQNFTDIDDKIIAKANAQGIEPSTLAERNIGVFLDAMAALNITPADYYPRATQEVPKIIEIVSGLIDKGYAYAVDGSVYLRVQKVDGYGKLSHRTLEQMMAGARVEIDEEKEYPMDFALWKATKPGEPSWESPWGLGRPGWHIECSAMSLRYLGEQIDIHGGGQDLIFPHHENEIAQSECFSGVKPFVKYWLHNGLLKLGEEKMSKSLGNLVTIKEALSRYSADALRIFVLSSSYRNPLTYSEEALEAAEKGAERLRQTAARKDNPQFKETTVDTKAYRERFTQYMDNDFNTSAALATIFDLSRELNRIEGEAGKSTDGQKLFKELADILGLSLIVAESKTGTDVAPFIELLIELRKDLRVAKQYQLADKIRTSLDTAGILLEDSAGGTVWKVKK</sequence>
<feature type="chain" id="PRO_0000332813" description="Cysteine--tRNA ligase">
    <location>
        <begin position="1"/>
        <end position="457"/>
    </location>
</feature>
<feature type="short sequence motif" description="'HIGH' region">
    <location>
        <begin position="29"/>
        <end position="39"/>
    </location>
</feature>
<feature type="short sequence motif" description="'KMSKS' region">
    <location>
        <begin position="265"/>
        <end position="269"/>
    </location>
</feature>
<feature type="binding site" evidence="1">
    <location>
        <position position="27"/>
    </location>
    <ligand>
        <name>Zn(2+)</name>
        <dbReference type="ChEBI" id="CHEBI:29105"/>
    </ligand>
</feature>
<feature type="binding site" evidence="1">
    <location>
        <position position="207"/>
    </location>
    <ligand>
        <name>Zn(2+)</name>
        <dbReference type="ChEBI" id="CHEBI:29105"/>
    </ligand>
</feature>
<feature type="binding site" evidence="1">
    <location>
        <position position="232"/>
    </location>
    <ligand>
        <name>Zn(2+)</name>
        <dbReference type="ChEBI" id="CHEBI:29105"/>
    </ligand>
</feature>
<feature type="binding site" evidence="1">
    <location>
        <position position="236"/>
    </location>
    <ligand>
        <name>Zn(2+)</name>
        <dbReference type="ChEBI" id="CHEBI:29105"/>
    </ligand>
</feature>
<feature type="binding site" evidence="1">
    <location>
        <position position="268"/>
    </location>
    <ligand>
        <name>ATP</name>
        <dbReference type="ChEBI" id="CHEBI:30616"/>
    </ligand>
</feature>
<protein>
    <recommendedName>
        <fullName evidence="1">Cysteine--tRNA ligase</fullName>
        <ecNumber evidence="1">6.1.1.16</ecNumber>
    </recommendedName>
    <alternativeName>
        <fullName evidence="1">Cysteinyl-tRNA synthetase</fullName>
        <shortName evidence="1">CysRS</shortName>
    </alternativeName>
</protein>
<reference key="1">
    <citation type="submission" date="2007-05" db="EMBL/GenBank/DDBJ databases">
        <title>Complete sequence of Dehalococcoides sp. BAV1.</title>
        <authorList>
            <consortium name="US DOE Joint Genome Institute"/>
            <person name="Copeland A."/>
            <person name="Lucas S."/>
            <person name="Lapidus A."/>
            <person name="Barry K."/>
            <person name="Detter J.C."/>
            <person name="Glavina del Rio T."/>
            <person name="Hammon N."/>
            <person name="Israni S."/>
            <person name="Pitluck S."/>
            <person name="Lowry S."/>
            <person name="Clum A."/>
            <person name="Schmutz J."/>
            <person name="Larimer F."/>
            <person name="Land M."/>
            <person name="Hauser L."/>
            <person name="Kyrpides N."/>
            <person name="Kim E."/>
            <person name="Ritalahti K.M."/>
            <person name="Loeffler F."/>
            <person name="Richardson P."/>
        </authorList>
    </citation>
    <scope>NUCLEOTIDE SEQUENCE [LARGE SCALE GENOMIC DNA]</scope>
    <source>
        <strain>ATCC BAA-2100 / JCM 16839 / KCTC 5957 / BAV1</strain>
    </source>
</reference>
<evidence type="ECO:0000255" key="1">
    <source>
        <dbReference type="HAMAP-Rule" id="MF_00041"/>
    </source>
</evidence>
<organism>
    <name type="scientific">Dehalococcoides mccartyi (strain ATCC BAA-2100 / JCM 16839 / KCTC 5957 / BAV1)</name>
    <dbReference type="NCBI Taxonomy" id="216389"/>
    <lineage>
        <taxon>Bacteria</taxon>
        <taxon>Bacillati</taxon>
        <taxon>Chloroflexota</taxon>
        <taxon>Dehalococcoidia</taxon>
        <taxon>Dehalococcoidales</taxon>
        <taxon>Dehalococcoidaceae</taxon>
        <taxon>Dehalococcoides</taxon>
    </lineage>
</organism>
<gene>
    <name evidence="1" type="primary">cysS</name>
    <name type="ordered locus">DehaBAV1_0055</name>
</gene>
<name>SYC_DEHMB</name>